<keyword id="KW-0004">4Fe-4S</keyword>
<keyword id="KW-0150">Chloroplast</keyword>
<keyword id="KW-0249">Electron transport</keyword>
<keyword id="KW-0408">Iron</keyword>
<keyword id="KW-0411">Iron-sulfur</keyword>
<keyword id="KW-0472">Membrane</keyword>
<keyword id="KW-0479">Metal-binding</keyword>
<keyword id="KW-0560">Oxidoreductase</keyword>
<keyword id="KW-0602">Photosynthesis</keyword>
<keyword id="KW-0603">Photosystem I</keyword>
<keyword id="KW-0934">Plastid</keyword>
<keyword id="KW-0677">Repeat</keyword>
<keyword id="KW-0793">Thylakoid</keyword>
<keyword id="KW-0813">Transport</keyword>
<reference key="1">
    <citation type="journal article" date="2007" name="Theor. Appl. Genet.">
        <title>Complete chloroplast genome sequences of Hordeum vulgare, Sorghum bicolor and Agrostis stolonifera, and comparative analyses with other grass genomes.</title>
        <authorList>
            <person name="Saski C."/>
            <person name="Lee S.-B."/>
            <person name="Fjellheim S."/>
            <person name="Guda C."/>
            <person name="Jansen R.K."/>
            <person name="Luo H."/>
            <person name="Tomkins J."/>
            <person name="Rognli O.A."/>
            <person name="Daniell H."/>
            <person name="Clarke J.L."/>
        </authorList>
    </citation>
    <scope>NUCLEOTIDE SEQUENCE [LARGE SCALE GENOMIC DNA]</scope>
    <source>
        <strain>cv. Penn A-4</strain>
    </source>
</reference>
<dbReference type="EC" id="1.97.1.12" evidence="2"/>
<dbReference type="EMBL" id="EF115543">
    <property type="protein sequence ID" value="ABK79632.1"/>
    <property type="molecule type" value="Genomic_DNA"/>
</dbReference>
<dbReference type="RefSeq" id="YP_874788.1">
    <property type="nucleotide sequence ID" value="NC_008591.1"/>
</dbReference>
<dbReference type="SMR" id="A1EA60"/>
<dbReference type="GeneID" id="4525037"/>
<dbReference type="GO" id="GO:0009535">
    <property type="term" value="C:chloroplast thylakoid membrane"/>
    <property type="evidence" value="ECO:0007669"/>
    <property type="project" value="UniProtKB-SubCell"/>
</dbReference>
<dbReference type="GO" id="GO:0009522">
    <property type="term" value="C:photosystem I"/>
    <property type="evidence" value="ECO:0007669"/>
    <property type="project" value="UniProtKB-KW"/>
</dbReference>
<dbReference type="GO" id="GO:0051539">
    <property type="term" value="F:4 iron, 4 sulfur cluster binding"/>
    <property type="evidence" value="ECO:0007669"/>
    <property type="project" value="UniProtKB-KW"/>
</dbReference>
<dbReference type="GO" id="GO:0009055">
    <property type="term" value="F:electron transfer activity"/>
    <property type="evidence" value="ECO:0007669"/>
    <property type="project" value="UniProtKB-UniRule"/>
</dbReference>
<dbReference type="GO" id="GO:0046872">
    <property type="term" value="F:metal ion binding"/>
    <property type="evidence" value="ECO:0007669"/>
    <property type="project" value="UniProtKB-KW"/>
</dbReference>
<dbReference type="GO" id="GO:0016491">
    <property type="term" value="F:oxidoreductase activity"/>
    <property type="evidence" value="ECO:0007669"/>
    <property type="project" value="UniProtKB-KW"/>
</dbReference>
<dbReference type="GO" id="GO:0009773">
    <property type="term" value="P:photosynthetic electron transport in photosystem I"/>
    <property type="evidence" value="ECO:0007669"/>
    <property type="project" value="InterPro"/>
</dbReference>
<dbReference type="FunFam" id="3.30.70.20:FF:000001">
    <property type="entry name" value="Photosystem I iron-sulfur center"/>
    <property type="match status" value="1"/>
</dbReference>
<dbReference type="Gene3D" id="3.30.70.20">
    <property type="match status" value="1"/>
</dbReference>
<dbReference type="HAMAP" id="MF_01303">
    <property type="entry name" value="PSI_PsaC"/>
    <property type="match status" value="1"/>
</dbReference>
<dbReference type="InterPro" id="IPR017896">
    <property type="entry name" value="4Fe4S_Fe-S-bd"/>
</dbReference>
<dbReference type="InterPro" id="IPR017900">
    <property type="entry name" value="4Fe4S_Fe_S_CS"/>
</dbReference>
<dbReference type="InterPro" id="IPR050157">
    <property type="entry name" value="PSI_iron-sulfur_center"/>
</dbReference>
<dbReference type="InterPro" id="IPR017491">
    <property type="entry name" value="PSI_PsaC"/>
</dbReference>
<dbReference type="NCBIfam" id="TIGR03048">
    <property type="entry name" value="PS_I_psaC"/>
    <property type="match status" value="1"/>
</dbReference>
<dbReference type="PANTHER" id="PTHR24960:SF79">
    <property type="entry name" value="PHOTOSYSTEM I IRON-SULFUR CENTER"/>
    <property type="match status" value="1"/>
</dbReference>
<dbReference type="PANTHER" id="PTHR24960">
    <property type="entry name" value="PHOTOSYSTEM I IRON-SULFUR CENTER-RELATED"/>
    <property type="match status" value="1"/>
</dbReference>
<dbReference type="Pfam" id="PF12838">
    <property type="entry name" value="Fer4_7"/>
    <property type="match status" value="1"/>
</dbReference>
<dbReference type="SUPFAM" id="SSF54862">
    <property type="entry name" value="4Fe-4S ferredoxins"/>
    <property type="match status" value="1"/>
</dbReference>
<dbReference type="PROSITE" id="PS00198">
    <property type="entry name" value="4FE4S_FER_1"/>
    <property type="match status" value="2"/>
</dbReference>
<dbReference type="PROSITE" id="PS51379">
    <property type="entry name" value="4FE4S_FER_2"/>
    <property type="match status" value="2"/>
</dbReference>
<accession>A1EA60</accession>
<comment type="function">
    <text evidence="2">Apoprotein for the two 4Fe-4S centers FA and FB of photosystem I (PSI); essential for photochemical activity. FB is the terminal electron acceptor of PSI, donating electrons to ferredoxin. The C-terminus interacts with PsaA/B/D and helps assemble the protein into the PSI complex. Required for binding of PsaD and PsaE to PSI. PSI is a plastocyanin-ferredoxin oxidoreductase, converting photonic excitation into a charge separation, which transfers an electron from the donor P700 chlorophyll pair to the spectroscopically characterized acceptors A0, A1, FX, FA and FB in turn.</text>
</comment>
<comment type="catalytic activity">
    <reaction evidence="2">
        <text>reduced [plastocyanin] + hnu + oxidized [2Fe-2S]-[ferredoxin] = oxidized [plastocyanin] + reduced [2Fe-2S]-[ferredoxin]</text>
        <dbReference type="Rhea" id="RHEA:30407"/>
        <dbReference type="Rhea" id="RHEA-COMP:10000"/>
        <dbReference type="Rhea" id="RHEA-COMP:10001"/>
        <dbReference type="Rhea" id="RHEA-COMP:10039"/>
        <dbReference type="Rhea" id="RHEA-COMP:10040"/>
        <dbReference type="ChEBI" id="CHEBI:29036"/>
        <dbReference type="ChEBI" id="CHEBI:30212"/>
        <dbReference type="ChEBI" id="CHEBI:33737"/>
        <dbReference type="ChEBI" id="CHEBI:33738"/>
        <dbReference type="ChEBI" id="CHEBI:49552"/>
        <dbReference type="EC" id="1.97.1.12"/>
    </reaction>
</comment>
<comment type="cofactor">
    <cofactor evidence="2">
        <name>[4Fe-4S] cluster</name>
        <dbReference type="ChEBI" id="CHEBI:49883"/>
    </cofactor>
    <text evidence="2">Binds 2 [4Fe-4S] clusters. Cluster 2 is most probably the spectroscopically characterized electron acceptor FA and cluster 1 is most probably FB.</text>
</comment>
<comment type="subunit">
    <text evidence="2">The eukaryotic PSI reaction center is composed of at least 11 subunits.</text>
</comment>
<comment type="subcellular location">
    <subcellularLocation>
        <location evidence="2">Plastid</location>
        <location evidence="2">Chloroplast thylakoid membrane</location>
        <topology evidence="2">Peripheral membrane protein</topology>
        <orientation evidence="2">Stromal side</orientation>
    </subcellularLocation>
</comment>
<feature type="initiator methionine" description="Removed" evidence="1">
    <location>
        <position position="1"/>
    </location>
</feature>
<feature type="chain" id="PRO_0000275974" description="Photosystem I iron-sulfur center">
    <location>
        <begin position="2"/>
        <end position="81"/>
    </location>
</feature>
<feature type="domain" description="4Fe-4S ferredoxin-type 1" evidence="2">
    <location>
        <begin position="2"/>
        <end position="31"/>
    </location>
</feature>
<feature type="domain" description="4Fe-4S ferredoxin-type 2" evidence="2">
    <location>
        <begin position="39"/>
        <end position="68"/>
    </location>
</feature>
<feature type="binding site" evidence="2">
    <location>
        <position position="11"/>
    </location>
    <ligand>
        <name>[4Fe-4S] cluster</name>
        <dbReference type="ChEBI" id="CHEBI:49883"/>
        <label>1</label>
    </ligand>
</feature>
<feature type="binding site" evidence="2">
    <location>
        <position position="14"/>
    </location>
    <ligand>
        <name>[4Fe-4S] cluster</name>
        <dbReference type="ChEBI" id="CHEBI:49883"/>
        <label>1</label>
    </ligand>
</feature>
<feature type="binding site" evidence="2">
    <location>
        <position position="17"/>
    </location>
    <ligand>
        <name>[4Fe-4S] cluster</name>
        <dbReference type="ChEBI" id="CHEBI:49883"/>
        <label>1</label>
    </ligand>
</feature>
<feature type="binding site" evidence="2">
    <location>
        <position position="21"/>
    </location>
    <ligand>
        <name>[4Fe-4S] cluster</name>
        <dbReference type="ChEBI" id="CHEBI:49883"/>
        <label>2</label>
    </ligand>
</feature>
<feature type="binding site" evidence="2">
    <location>
        <position position="48"/>
    </location>
    <ligand>
        <name>[4Fe-4S] cluster</name>
        <dbReference type="ChEBI" id="CHEBI:49883"/>
        <label>2</label>
    </ligand>
</feature>
<feature type="binding site" evidence="2">
    <location>
        <position position="51"/>
    </location>
    <ligand>
        <name>[4Fe-4S] cluster</name>
        <dbReference type="ChEBI" id="CHEBI:49883"/>
        <label>2</label>
    </ligand>
</feature>
<feature type="binding site" evidence="2">
    <location>
        <position position="54"/>
    </location>
    <ligand>
        <name>[4Fe-4S] cluster</name>
        <dbReference type="ChEBI" id="CHEBI:49883"/>
        <label>2</label>
    </ligand>
</feature>
<feature type="binding site" evidence="2">
    <location>
        <position position="58"/>
    </location>
    <ligand>
        <name>[4Fe-4S] cluster</name>
        <dbReference type="ChEBI" id="CHEBI:49883"/>
        <label>1</label>
    </ligand>
</feature>
<organism>
    <name type="scientific">Agrostis stolonifera</name>
    <name type="common">Creeping bentgrass</name>
    <dbReference type="NCBI Taxonomy" id="63632"/>
    <lineage>
        <taxon>Eukaryota</taxon>
        <taxon>Viridiplantae</taxon>
        <taxon>Streptophyta</taxon>
        <taxon>Embryophyta</taxon>
        <taxon>Tracheophyta</taxon>
        <taxon>Spermatophyta</taxon>
        <taxon>Magnoliopsida</taxon>
        <taxon>Liliopsida</taxon>
        <taxon>Poales</taxon>
        <taxon>Poaceae</taxon>
        <taxon>BOP clade</taxon>
        <taxon>Pooideae</taxon>
        <taxon>Poodae</taxon>
        <taxon>Poeae</taxon>
        <taxon>Poeae Chloroplast Group 1 (Aveneae type)</taxon>
        <taxon>Agrostidodinae</taxon>
        <taxon>Agrostidinae</taxon>
        <taxon>Agrostis</taxon>
    </lineage>
</organism>
<name>PSAC_AGRST</name>
<gene>
    <name evidence="2" type="primary">psaC</name>
</gene>
<geneLocation type="chloroplast"/>
<protein>
    <recommendedName>
        <fullName evidence="2">Photosystem I iron-sulfur center</fullName>
        <ecNumber evidence="2">1.97.1.12</ecNumber>
    </recommendedName>
    <alternativeName>
        <fullName evidence="2">9 kDa polypeptide</fullName>
    </alternativeName>
    <alternativeName>
        <fullName evidence="2">PSI-C</fullName>
    </alternativeName>
    <alternativeName>
        <fullName evidence="2">Photosystem I subunit VII</fullName>
    </alternativeName>
    <alternativeName>
        <fullName evidence="2">PsaC</fullName>
    </alternativeName>
</protein>
<proteinExistence type="inferred from homology"/>
<sequence length="81" mass="8899">MSHSVKIYDTCIGCTQCVRACPTDVLEMIPWDGCKAKQIASAPRTEDCVGCKRCESACPTDFLSVRVYLGPETTRSMALSY</sequence>
<evidence type="ECO:0000250" key="1"/>
<evidence type="ECO:0000255" key="2">
    <source>
        <dbReference type="HAMAP-Rule" id="MF_01303"/>
    </source>
</evidence>